<protein>
    <recommendedName>
        <fullName evidence="4">U-Asilidin(12)-Dg3b</fullName>
    </recommendedName>
</protein>
<accession>A0A3G5BIB1</accession>
<organism>
    <name type="scientific">Dolopus genitalis</name>
    <name type="common">Giant Australian assassin fly</name>
    <name type="synonym">Asilus genitalis</name>
    <dbReference type="NCBI Taxonomy" id="2488630"/>
    <lineage>
        <taxon>Eukaryota</taxon>
        <taxon>Metazoa</taxon>
        <taxon>Ecdysozoa</taxon>
        <taxon>Arthropoda</taxon>
        <taxon>Hexapoda</taxon>
        <taxon>Insecta</taxon>
        <taxon>Pterygota</taxon>
        <taxon>Neoptera</taxon>
        <taxon>Endopterygota</taxon>
        <taxon>Diptera</taxon>
        <taxon>Brachycera</taxon>
        <taxon>Muscomorpha</taxon>
        <taxon>Asiloidea</taxon>
        <taxon>Asilidae</taxon>
        <taxon>Asilinae</taxon>
        <taxon>Dolopus</taxon>
    </lineage>
</organism>
<name>ASC3B_DOLGE</name>
<dbReference type="EMBL" id="MK075121">
    <property type="protein sequence ID" value="AYV99524.1"/>
    <property type="molecule type" value="mRNA"/>
</dbReference>
<dbReference type="PDB" id="6PX8">
    <property type="method" value="NMR"/>
    <property type="chains" value="A=34-69"/>
</dbReference>
<dbReference type="PDBsum" id="6PX8"/>
<dbReference type="BMRB" id="A0A3G5BIB1"/>
<dbReference type="SMR" id="A0A3G5BIB1"/>
<dbReference type="GO" id="GO:0005615">
    <property type="term" value="C:extracellular space"/>
    <property type="evidence" value="ECO:0007669"/>
    <property type="project" value="TreeGrafter"/>
</dbReference>
<dbReference type="GO" id="GO:0015459">
    <property type="term" value="F:potassium channel regulator activity"/>
    <property type="evidence" value="ECO:0007669"/>
    <property type="project" value="UniProtKB-KW"/>
</dbReference>
<dbReference type="GO" id="GO:0090729">
    <property type="term" value="F:toxin activity"/>
    <property type="evidence" value="ECO:0007669"/>
    <property type="project" value="UniProtKB-KW"/>
</dbReference>
<dbReference type="GO" id="GO:0050830">
    <property type="term" value="P:defense response to Gram-positive bacterium"/>
    <property type="evidence" value="ECO:0007669"/>
    <property type="project" value="UniProtKB-ARBA"/>
</dbReference>
<dbReference type="GO" id="GO:0006959">
    <property type="term" value="P:humoral immune response"/>
    <property type="evidence" value="ECO:0007669"/>
    <property type="project" value="TreeGrafter"/>
</dbReference>
<dbReference type="CDD" id="cd21806">
    <property type="entry name" value="DEFL_defensin-like"/>
    <property type="match status" value="1"/>
</dbReference>
<dbReference type="Gene3D" id="3.30.30.10">
    <property type="entry name" value="Knottin, scorpion toxin-like"/>
    <property type="match status" value="1"/>
</dbReference>
<dbReference type="InterPro" id="IPR001542">
    <property type="entry name" value="Defensin_invertebrate/fungal"/>
</dbReference>
<dbReference type="InterPro" id="IPR036574">
    <property type="entry name" value="Scorpion_toxin-like_sf"/>
</dbReference>
<dbReference type="PANTHER" id="PTHR13645">
    <property type="entry name" value="DEFENSIN"/>
    <property type="match status" value="1"/>
</dbReference>
<dbReference type="PANTHER" id="PTHR13645:SF0">
    <property type="entry name" value="DEFENSIN"/>
    <property type="match status" value="1"/>
</dbReference>
<dbReference type="Pfam" id="PF01097">
    <property type="entry name" value="Defensin_2"/>
    <property type="match status" value="1"/>
</dbReference>
<dbReference type="SUPFAM" id="SSF57095">
    <property type="entry name" value="Scorpion toxin-like"/>
    <property type="match status" value="1"/>
</dbReference>
<dbReference type="PROSITE" id="PS51378">
    <property type="entry name" value="INVERT_DEFENSINS"/>
    <property type="match status" value="1"/>
</dbReference>
<proteinExistence type="evidence at protein level"/>
<sequence length="69" mass="7939">MRFLNIFLFFAVMIAFVSASPVLEEEEIDIEPRITCDLIGNERLCVVHCLAKGFRGGWCDSRKVCNCRR</sequence>
<feature type="signal peptide" evidence="1">
    <location>
        <begin position="1"/>
        <end position="19"/>
    </location>
</feature>
<feature type="propeptide" id="PRO_0000452537" evidence="6">
    <location>
        <begin position="20"/>
        <end position="33"/>
    </location>
</feature>
<feature type="chain" id="PRO_5018247767" description="U-Asilidin(12)-Dg3b" evidence="2">
    <location>
        <begin position="34"/>
        <end position="69"/>
    </location>
</feature>
<feature type="disulfide bond" evidence="3 8">
    <location>
        <begin position="36"/>
        <end position="59"/>
    </location>
</feature>
<feature type="disulfide bond" evidence="3 8">
    <location>
        <begin position="45"/>
        <end position="65"/>
    </location>
</feature>
<feature type="disulfide bond" evidence="3 8">
    <location>
        <begin position="49"/>
        <end position="67"/>
    </location>
</feature>
<feature type="strand" evidence="9">
    <location>
        <begin position="37"/>
        <end position="40"/>
    </location>
</feature>
<feature type="helix" evidence="9">
    <location>
        <begin position="43"/>
        <end position="52"/>
    </location>
</feature>
<feature type="strand" evidence="9">
    <location>
        <begin position="57"/>
        <end position="59"/>
    </location>
</feature>
<feature type="strand" evidence="9">
    <location>
        <begin position="65"/>
        <end position="67"/>
    </location>
</feature>
<keyword id="KW-0002">3D-structure</keyword>
<keyword id="KW-1015">Disulfide bond</keyword>
<keyword id="KW-0872">Ion channel impairing toxin</keyword>
<keyword id="KW-0528">Neurotoxin</keyword>
<keyword id="KW-0632">Potassium channel impairing toxin</keyword>
<keyword id="KW-0964">Secreted</keyword>
<keyword id="KW-0732">Signal</keyword>
<keyword id="KW-0800">Toxin</keyword>
<keyword id="KW-1220">Voltage-gated potassium channel impairing toxin</keyword>
<comment type="function">
    <text evidence="3">The recombinant peptide moderately increases Kv11.1/KCNH2/ERG1 currents and shifts the voltage-dependence of the channel activation to hyperpolarised potentials (PubMed:31870846). In vivo, induces neurotoxic effects when injected into insects (tested on L.cuprina and A.domesticus) (PubMed:31870846).</text>
</comment>
<comment type="subcellular location">
    <subcellularLocation>
        <location evidence="2 3">Secreted</location>
    </subcellularLocation>
</comment>
<comment type="tissue specificity">
    <text evidence="6 7">Expressed by the venom gland.</text>
</comment>
<comment type="domain">
    <text evidence="6">Has the structural arrangement of an alpha-helix connected to antiparallel beta-sheets by disulfide bonds (CS-alpha/beta).</text>
</comment>
<comment type="mass spectrometry" mass="4073.85" method="MALDI" evidence="2">
    <text>Monoisotopic mass.</text>
</comment>
<comment type="mass spectrometry" mass="4073.59" method="MALDI" evidence="3">
    <text>Monoisotopic mass.</text>
</comment>
<comment type="miscellaneous">
    <text evidence="2">Is abundant in venom, since it accounts for 45.2% of precursor counts.</text>
</comment>
<comment type="miscellaneous">
    <text evidence="3">The recombinant peptide contains an extra Gly residue at N-terminal position.</text>
</comment>
<comment type="miscellaneous">
    <text evidence="3">Negative results: the recombinant peptide has no effect on Kv1.3/KCNA3, Kv2.1/KCNB1, Kv10.1/KCNH1/EAG1, KCa1.1/KCNMA1, or the drosophila Shaker IR channel.</text>
</comment>
<comment type="similarity">
    <text evidence="5">Belongs to the asilidin-12 family.</text>
</comment>
<evidence type="ECO:0000255" key="1"/>
<evidence type="ECO:0000269" key="2">
    <source>
    </source>
</evidence>
<evidence type="ECO:0000269" key="3">
    <source>
    </source>
</evidence>
<evidence type="ECO:0000303" key="4">
    <source>
    </source>
</evidence>
<evidence type="ECO:0000305" key="5"/>
<evidence type="ECO:0000305" key="6">
    <source>
    </source>
</evidence>
<evidence type="ECO:0000305" key="7">
    <source>
    </source>
</evidence>
<evidence type="ECO:0007744" key="8">
    <source>
        <dbReference type="PDB" id="6PX8"/>
    </source>
</evidence>
<evidence type="ECO:0007829" key="9">
    <source>
        <dbReference type="PDB" id="6PX8"/>
    </source>
</evidence>
<reference key="1">
    <citation type="journal article" date="2018" name="Toxins">
        <title>Buzz kill: function and proteomic composition of venom from the giant assassin fly Dolopus genitalis (Diptera: Asilidae).</title>
        <authorList>
            <person name="Walker A.A."/>
            <person name="Dobson J."/>
            <person name="Jin J."/>
            <person name="Robinson S.D."/>
            <person name="Herzig V."/>
            <person name="Vetter I."/>
            <person name="King G.F."/>
            <person name="Fry B.G."/>
        </authorList>
    </citation>
    <scope>NUCLEOTIDE SEQUENCE [MRNA]</scope>
    <scope>MASS SPECTROMETRY</scope>
    <scope>SUBCELLULAR LOCATION</scope>
    <source>
        <tissue>Venom</tissue>
        <tissue>Venom gland</tissue>
    </source>
</reference>
<reference evidence="8" key="2">
    <citation type="journal article" date="2020" name="Insect Biochem. Mol. Biol.">
        <title>Weaponisation 'on the fly': convergent recruitment of knottin and defensin peptide scaffolds into the venom of predatory assassin flies.</title>
        <authorList>
            <person name="Jin J."/>
            <person name="Agwa A.J."/>
            <person name="Szanto T.G."/>
            <person name="Csoti A."/>
            <person name="Panyi G."/>
            <person name="Schroeder C.I."/>
            <person name="Walker A.A."/>
            <person name="King G.F."/>
        </authorList>
    </citation>
    <scope>STRUCTURE BY NMR OF 34-69</scope>
    <scope>FUNCTION</scope>
    <scope>DISULFIDE BONDS</scope>
    <scope>RECOMBINANT EXPRESSION</scope>
    <scope>MASS SPECTROMETRY</scope>
    <scope>SUBCELLULAR LOCATION</scope>
    <source>
        <tissue>Venom</tissue>
    </source>
</reference>